<organism>
    <name type="scientific">Xanthomonas euvesicatoria pv. vesicatoria (strain 85-10)</name>
    <name type="common">Xanthomonas campestris pv. vesicatoria</name>
    <dbReference type="NCBI Taxonomy" id="316273"/>
    <lineage>
        <taxon>Bacteria</taxon>
        <taxon>Pseudomonadati</taxon>
        <taxon>Pseudomonadota</taxon>
        <taxon>Gammaproteobacteria</taxon>
        <taxon>Lysobacterales</taxon>
        <taxon>Lysobacteraceae</taxon>
        <taxon>Xanthomonas</taxon>
    </lineage>
</organism>
<keyword id="KW-0963">Cytoplasm</keyword>
<keyword id="KW-0227">DNA damage</keyword>
<keyword id="KW-0233">DNA recombination</keyword>
<keyword id="KW-0234">DNA repair</keyword>
<keyword id="KW-0238">DNA-binding</keyword>
<name>RUVA_XANE5</name>
<dbReference type="EMBL" id="AM039952">
    <property type="protein sequence ID" value="CAJ25011.1"/>
    <property type="molecule type" value="Genomic_DNA"/>
</dbReference>
<dbReference type="RefSeq" id="WP_008578070.1">
    <property type="nucleotide sequence ID" value="NZ_CP017190.1"/>
</dbReference>
<dbReference type="SMR" id="Q3BQF2"/>
<dbReference type="STRING" id="456327.BJD11_06365"/>
<dbReference type="GeneID" id="97511406"/>
<dbReference type="KEGG" id="xcv:XCV3280"/>
<dbReference type="eggNOG" id="COG0632">
    <property type="taxonomic scope" value="Bacteria"/>
</dbReference>
<dbReference type="HOGENOM" id="CLU_087936_0_0_6"/>
<dbReference type="Proteomes" id="UP000007069">
    <property type="component" value="Chromosome"/>
</dbReference>
<dbReference type="GO" id="GO:0005737">
    <property type="term" value="C:cytoplasm"/>
    <property type="evidence" value="ECO:0007669"/>
    <property type="project" value="UniProtKB-SubCell"/>
</dbReference>
<dbReference type="GO" id="GO:0009379">
    <property type="term" value="C:Holliday junction helicase complex"/>
    <property type="evidence" value="ECO:0007669"/>
    <property type="project" value="InterPro"/>
</dbReference>
<dbReference type="GO" id="GO:0048476">
    <property type="term" value="C:Holliday junction resolvase complex"/>
    <property type="evidence" value="ECO:0007669"/>
    <property type="project" value="UniProtKB-UniRule"/>
</dbReference>
<dbReference type="GO" id="GO:0005524">
    <property type="term" value="F:ATP binding"/>
    <property type="evidence" value="ECO:0007669"/>
    <property type="project" value="InterPro"/>
</dbReference>
<dbReference type="GO" id="GO:0000400">
    <property type="term" value="F:four-way junction DNA binding"/>
    <property type="evidence" value="ECO:0007669"/>
    <property type="project" value="UniProtKB-UniRule"/>
</dbReference>
<dbReference type="GO" id="GO:0009378">
    <property type="term" value="F:four-way junction helicase activity"/>
    <property type="evidence" value="ECO:0007669"/>
    <property type="project" value="InterPro"/>
</dbReference>
<dbReference type="GO" id="GO:0006310">
    <property type="term" value="P:DNA recombination"/>
    <property type="evidence" value="ECO:0007669"/>
    <property type="project" value="UniProtKB-UniRule"/>
</dbReference>
<dbReference type="GO" id="GO:0006281">
    <property type="term" value="P:DNA repair"/>
    <property type="evidence" value="ECO:0007669"/>
    <property type="project" value="UniProtKB-UniRule"/>
</dbReference>
<dbReference type="CDD" id="cd14332">
    <property type="entry name" value="UBA_RuvA_C"/>
    <property type="match status" value="1"/>
</dbReference>
<dbReference type="Gene3D" id="1.10.150.20">
    <property type="entry name" value="5' to 3' exonuclease, C-terminal subdomain"/>
    <property type="match status" value="1"/>
</dbReference>
<dbReference type="Gene3D" id="1.10.8.10">
    <property type="entry name" value="DNA helicase RuvA subunit, C-terminal domain"/>
    <property type="match status" value="1"/>
</dbReference>
<dbReference type="Gene3D" id="2.40.50.140">
    <property type="entry name" value="Nucleic acid-binding proteins"/>
    <property type="match status" value="1"/>
</dbReference>
<dbReference type="HAMAP" id="MF_00031">
    <property type="entry name" value="DNA_HJ_migration_RuvA"/>
    <property type="match status" value="1"/>
</dbReference>
<dbReference type="InterPro" id="IPR013849">
    <property type="entry name" value="DNA_helicase_Holl-junc_RuvA_I"/>
</dbReference>
<dbReference type="InterPro" id="IPR003583">
    <property type="entry name" value="Hlx-hairpin-Hlx_DNA-bd_motif"/>
</dbReference>
<dbReference type="InterPro" id="IPR012340">
    <property type="entry name" value="NA-bd_OB-fold"/>
</dbReference>
<dbReference type="InterPro" id="IPR000085">
    <property type="entry name" value="RuvA"/>
</dbReference>
<dbReference type="InterPro" id="IPR010994">
    <property type="entry name" value="RuvA_2-like"/>
</dbReference>
<dbReference type="InterPro" id="IPR011114">
    <property type="entry name" value="RuvA_C"/>
</dbReference>
<dbReference type="InterPro" id="IPR036267">
    <property type="entry name" value="RuvA_C_sf"/>
</dbReference>
<dbReference type="NCBIfam" id="TIGR00084">
    <property type="entry name" value="ruvA"/>
    <property type="match status" value="1"/>
</dbReference>
<dbReference type="Pfam" id="PF14520">
    <property type="entry name" value="HHH_5"/>
    <property type="match status" value="1"/>
</dbReference>
<dbReference type="Pfam" id="PF07499">
    <property type="entry name" value="RuvA_C"/>
    <property type="match status" value="1"/>
</dbReference>
<dbReference type="Pfam" id="PF01330">
    <property type="entry name" value="RuvA_N"/>
    <property type="match status" value="1"/>
</dbReference>
<dbReference type="SMART" id="SM00278">
    <property type="entry name" value="HhH1"/>
    <property type="match status" value="2"/>
</dbReference>
<dbReference type="SUPFAM" id="SSF46929">
    <property type="entry name" value="DNA helicase RuvA subunit, C-terminal domain"/>
    <property type="match status" value="1"/>
</dbReference>
<dbReference type="SUPFAM" id="SSF50249">
    <property type="entry name" value="Nucleic acid-binding proteins"/>
    <property type="match status" value="1"/>
</dbReference>
<dbReference type="SUPFAM" id="SSF47781">
    <property type="entry name" value="RuvA domain 2-like"/>
    <property type="match status" value="1"/>
</dbReference>
<feature type="chain" id="PRO_0000224923" description="Holliday junction branch migration complex subunit RuvA">
    <location>
        <begin position="1"/>
        <end position="194"/>
    </location>
</feature>
<feature type="region of interest" description="Domain I" evidence="1">
    <location>
        <begin position="1"/>
        <end position="64"/>
    </location>
</feature>
<feature type="region of interest" description="Domain II" evidence="1">
    <location>
        <begin position="65"/>
        <end position="140"/>
    </location>
</feature>
<feature type="region of interest" description="Flexible linker" evidence="1">
    <location>
        <begin position="140"/>
        <end position="144"/>
    </location>
</feature>
<feature type="region of interest" description="Domain III" evidence="1">
    <location>
        <begin position="145"/>
        <end position="194"/>
    </location>
</feature>
<sequence length="194" mass="20862">MIGRLRGILAYKQPPWLVIDVGGVGYELEAPMSTFYDLPDVGRDVILFTHYAQKEDSVALYGFLREGERRLFRDVQKVTGIGAKIALAVLSGVSVDEFARLITSGDITALTRIPGIGKKTAERMVVELRDRAADFSSGAPITGQLGPDAVSEATVALQQLGYKPAEAARMARDAGAEGDEVATVIRKALQAALR</sequence>
<proteinExistence type="inferred from homology"/>
<reference key="1">
    <citation type="journal article" date="2005" name="J. Bacteriol.">
        <title>Insights into genome plasticity and pathogenicity of the plant pathogenic Bacterium Xanthomonas campestris pv. vesicatoria revealed by the complete genome sequence.</title>
        <authorList>
            <person name="Thieme F."/>
            <person name="Koebnik R."/>
            <person name="Bekel T."/>
            <person name="Berger C."/>
            <person name="Boch J."/>
            <person name="Buettner D."/>
            <person name="Caldana C."/>
            <person name="Gaigalat L."/>
            <person name="Goesmann A."/>
            <person name="Kay S."/>
            <person name="Kirchner O."/>
            <person name="Lanz C."/>
            <person name="Linke B."/>
            <person name="McHardy A.C."/>
            <person name="Meyer F."/>
            <person name="Mittenhuber G."/>
            <person name="Nies D.H."/>
            <person name="Niesbach-Kloesgen U."/>
            <person name="Patschkowski T."/>
            <person name="Rueckert C."/>
            <person name="Rupp O."/>
            <person name="Schneiker S."/>
            <person name="Schuster S.C."/>
            <person name="Vorhoelter F.J."/>
            <person name="Weber E."/>
            <person name="Puehler A."/>
            <person name="Bonas U."/>
            <person name="Bartels D."/>
            <person name="Kaiser O."/>
        </authorList>
    </citation>
    <scope>NUCLEOTIDE SEQUENCE [LARGE SCALE GENOMIC DNA]</scope>
    <source>
        <strain>85-10</strain>
    </source>
</reference>
<gene>
    <name evidence="1" type="primary">ruvA</name>
    <name type="ordered locus">XCV3280</name>
</gene>
<accession>Q3BQF2</accession>
<evidence type="ECO:0000255" key="1">
    <source>
        <dbReference type="HAMAP-Rule" id="MF_00031"/>
    </source>
</evidence>
<comment type="function">
    <text evidence="1">The RuvA-RuvB-RuvC complex processes Holliday junction (HJ) DNA during genetic recombination and DNA repair, while the RuvA-RuvB complex plays an important role in the rescue of blocked DNA replication forks via replication fork reversal (RFR). RuvA specifically binds to HJ cruciform DNA, conferring on it an open structure. The RuvB hexamer acts as an ATP-dependent pump, pulling dsDNA into and through the RuvAB complex. HJ branch migration allows RuvC to scan DNA until it finds its consensus sequence, where it cleaves and resolves the cruciform DNA.</text>
</comment>
<comment type="subunit">
    <text evidence="1">Homotetramer. Forms an RuvA(8)-RuvB(12)-Holliday junction (HJ) complex. HJ DNA is sandwiched between 2 RuvA tetramers; dsDNA enters through RuvA and exits via RuvB. An RuvB hexamer assembles on each DNA strand where it exits the tetramer. Each RuvB hexamer is contacted by two RuvA subunits (via domain III) on 2 adjacent RuvB subunits; this complex drives branch migration. In the full resolvosome a probable DNA-RuvA(4)-RuvB(12)-RuvC(2) complex forms which resolves the HJ.</text>
</comment>
<comment type="subcellular location">
    <subcellularLocation>
        <location evidence="1">Cytoplasm</location>
    </subcellularLocation>
</comment>
<comment type="domain">
    <text evidence="1">Has three domains with a flexible linker between the domains II and III and assumes an 'L' shape. Domain III is highly mobile and contacts RuvB.</text>
</comment>
<comment type="similarity">
    <text evidence="1">Belongs to the RuvA family.</text>
</comment>
<protein>
    <recommendedName>
        <fullName evidence="1">Holliday junction branch migration complex subunit RuvA</fullName>
    </recommendedName>
</protein>